<evidence type="ECO:0000250" key="1">
    <source>
        <dbReference type="UniProtKB" id="D3ZX63"/>
    </source>
</evidence>
<evidence type="ECO:0000255" key="2"/>
<evidence type="ECO:0000269" key="3">
    <source>
    </source>
</evidence>
<evidence type="ECO:0000269" key="4">
    <source>
    </source>
</evidence>
<evidence type="ECO:0000303" key="5">
    <source>
    </source>
</evidence>
<evidence type="ECO:0000303" key="6">
    <source>
    </source>
</evidence>
<evidence type="ECO:0000305" key="7"/>
<evidence type="ECO:0000312" key="8">
    <source>
        <dbReference type="HGNC" id="HGNC:25770"/>
    </source>
</evidence>
<dbReference type="EMBL" id="AK023015">
    <property type="protein sequence ID" value="BAB14358.1"/>
    <property type="molecule type" value="mRNA"/>
</dbReference>
<dbReference type="EMBL" id="AK222696">
    <property type="protein sequence ID" value="BAD96416.1"/>
    <property type="molecule type" value="mRNA"/>
</dbReference>
<dbReference type="EMBL" id="CH471053">
    <property type="protein sequence ID" value="EAW99677.1"/>
    <property type="molecule type" value="Genomic_DNA"/>
</dbReference>
<dbReference type="EMBL" id="CH471053">
    <property type="protein sequence ID" value="EAW99680.1"/>
    <property type="molecule type" value="Genomic_DNA"/>
</dbReference>
<dbReference type="EMBL" id="AC005041">
    <property type="status" value="NOT_ANNOTATED_CDS"/>
    <property type="molecule type" value="Genomic_DNA"/>
</dbReference>
<dbReference type="EMBL" id="BC051848">
    <property type="protein sequence ID" value="AAH51848.1"/>
    <property type="molecule type" value="mRNA"/>
</dbReference>
<dbReference type="CCDS" id="CCDS1940.1">
    <molecule id="Q9H977-1"/>
</dbReference>
<dbReference type="CCDS" id="CCDS82473.1">
    <molecule id="Q9H977-3"/>
</dbReference>
<dbReference type="RefSeq" id="NP_001307752.1">
    <molecule id="Q9H977-4"/>
    <property type="nucleotide sequence ID" value="NM_001320823.2"/>
</dbReference>
<dbReference type="RefSeq" id="NP_001307753.1">
    <molecule id="Q9H977-1"/>
    <property type="nucleotide sequence ID" value="NM_001320824.2"/>
</dbReference>
<dbReference type="RefSeq" id="NP_001307754.1">
    <molecule id="Q9H977-3"/>
    <property type="nucleotide sequence ID" value="NM_001320825.2"/>
</dbReference>
<dbReference type="RefSeq" id="NP_115494.1">
    <molecule id="Q9H977-1"/>
    <property type="nucleotide sequence ID" value="NM_032118.4"/>
</dbReference>
<dbReference type="SMR" id="Q9H977"/>
<dbReference type="BioGRID" id="123853">
    <property type="interactions" value="51"/>
</dbReference>
<dbReference type="FunCoup" id="Q9H977">
    <property type="interactions" value="395"/>
</dbReference>
<dbReference type="IntAct" id="Q9H977">
    <property type="interactions" value="42"/>
</dbReference>
<dbReference type="STRING" id="9606.ENSP00000006526"/>
<dbReference type="GlyGen" id="Q9H977">
    <property type="glycosylation" value="2 sites, 1 N-linked glycan (2 sites)"/>
</dbReference>
<dbReference type="iPTMnet" id="Q9H977"/>
<dbReference type="PhosphoSitePlus" id="Q9H977"/>
<dbReference type="BioMuta" id="WDR54"/>
<dbReference type="DMDM" id="74761551"/>
<dbReference type="jPOST" id="Q9H977"/>
<dbReference type="MassIVE" id="Q9H977"/>
<dbReference type="PaxDb" id="9606-ENSP00000006526"/>
<dbReference type="PeptideAtlas" id="Q9H977"/>
<dbReference type="ProteomicsDB" id="7498"/>
<dbReference type="ProteomicsDB" id="81290"/>
<dbReference type="Pumba" id="Q9H977"/>
<dbReference type="Antibodypedia" id="51442">
    <property type="antibodies" value="79 antibodies from 15 providers"/>
</dbReference>
<dbReference type="DNASU" id="84058"/>
<dbReference type="Ensembl" id="ENST00000348227.4">
    <molecule id="Q9H977-1"/>
    <property type="protein sequence ID" value="ENSP00000006526.6"/>
    <property type="gene ID" value="ENSG00000005448.17"/>
</dbReference>
<dbReference type="Ensembl" id="ENST00000409791.5">
    <molecule id="Q9H977-3"/>
    <property type="protein sequence ID" value="ENSP00000387236.1"/>
    <property type="gene ID" value="ENSG00000005448.17"/>
</dbReference>
<dbReference type="GeneID" id="84058"/>
<dbReference type="KEGG" id="hsa:84058"/>
<dbReference type="MANE-Select" id="ENST00000348227.4">
    <property type="protein sequence ID" value="ENSP00000006526.6"/>
    <property type="RefSeq nucleotide sequence ID" value="NM_032118.4"/>
    <property type="RefSeq protein sequence ID" value="NP_115494.1"/>
</dbReference>
<dbReference type="UCSC" id="uc002slb.4">
    <molecule id="Q9H977-1"/>
    <property type="organism name" value="human"/>
</dbReference>
<dbReference type="AGR" id="HGNC:25770"/>
<dbReference type="CTD" id="84058"/>
<dbReference type="DisGeNET" id="84058"/>
<dbReference type="GeneCards" id="WDR54"/>
<dbReference type="HGNC" id="HGNC:25770">
    <property type="gene designation" value="WDR54"/>
</dbReference>
<dbReference type="HPA" id="ENSG00000005448">
    <property type="expression patterns" value="Tissue enhanced (fallopian)"/>
</dbReference>
<dbReference type="MIM" id="620826">
    <property type="type" value="gene"/>
</dbReference>
<dbReference type="neXtProt" id="NX_Q9H977"/>
<dbReference type="OpenTargets" id="ENSG00000005448"/>
<dbReference type="PharmGKB" id="PA142670589"/>
<dbReference type="VEuPathDB" id="HostDB:ENSG00000005448"/>
<dbReference type="eggNOG" id="ENOG502QRUZ">
    <property type="taxonomic scope" value="Eukaryota"/>
</dbReference>
<dbReference type="GeneTree" id="ENSGT00390000014530"/>
<dbReference type="HOGENOM" id="CLU_045688_2_0_1"/>
<dbReference type="InParanoid" id="Q9H977"/>
<dbReference type="OMA" id="WENYICV"/>
<dbReference type="OrthoDB" id="756370at2759"/>
<dbReference type="PAN-GO" id="Q9H977">
    <property type="GO annotations" value="0 GO annotations based on evolutionary models"/>
</dbReference>
<dbReference type="PhylomeDB" id="Q9H977"/>
<dbReference type="TreeFam" id="TF329316"/>
<dbReference type="PathwayCommons" id="Q9H977"/>
<dbReference type="SignaLink" id="Q9H977"/>
<dbReference type="BioGRID-ORCS" id="84058">
    <property type="hits" value="58 hits in 1157 CRISPR screens"/>
</dbReference>
<dbReference type="ChiTaRS" id="WDR54">
    <property type="organism name" value="human"/>
</dbReference>
<dbReference type="GenomeRNAi" id="84058"/>
<dbReference type="Pharos" id="Q9H977">
    <property type="development level" value="Tdark"/>
</dbReference>
<dbReference type="PRO" id="PR:Q9H977"/>
<dbReference type="Proteomes" id="UP000005640">
    <property type="component" value="Chromosome 2"/>
</dbReference>
<dbReference type="RNAct" id="Q9H977">
    <property type="molecule type" value="protein"/>
</dbReference>
<dbReference type="Bgee" id="ENSG00000005448">
    <property type="expression patterns" value="Expressed in bronchial epithelial cell and 148 other cell types or tissues"/>
</dbReference>
<dbReference type="GO" id="GO:0005737">
    <property type="term" value="C:cytoplasm"/>
    <property type="evidence" value="ECO:0000250"/>
    <property type="project" value="UniProtKB"/>
</dbReference>
<dbReference type="GO" id="GO:0031514">
    <property type="term" value="C:motile cilium"/>
    <property type="evidence" value="ECO:0000318"/>
    <property type="project" value="GO_Central"/>
</dbReference>
<dbReference type="GO" id="GO:0005886">
    <property type="term" value="C:plasma membrane"/>
    <property type="evidence" value="ECO:0000250"/>
    <property type="project" value="UniProtKB"/>
</dbReference>
<dbReference type="GO" id="GO:0031982">
    <property type="term" value="C:vesicle"/>
    <property type="evidence" value="ECO:0000314"/>
    <property type="project" value="UniProtKB"/>
</dbReference>
<dbReference type="GO" id="GO:0042803">
    <property type="term" value="F:protein homodimerization activity"/>
    <property type="evidence" value="ECO:0000314"/>
    <property type="project" value="UniProtKB"/>
</dbReference>
<dbReference type="GO" id="GO:0007342">
    <property type="term" value="P:fusion of sperm to egg plasma membrane involved in single fertilization"/>
    <property type="evidence" value="ECO:0000250"/>
    <property type="project" value="UniProtKB"/>
</dbReference>
<dbReference type="GO" id="GO:0002091">
    <property type="term" value="P:negative regulation of receptor internalization"/>
    <property type="evidence" value="ECO:0000315"/>
    <property type="project" value="UniProtKB"/>
</dbReference>
<dbReference type="GO" id="GO:0042058">
    <property type="term" value="P:regulation of epidermal growth factor receptor signaling pathway"/>
    <property type="evidence" value="ECO:0000314"/>
    <property type="project" value="UniProtKB"/>
</dbReference>
<dbReference type="GO" id="GO:0043408">
    <property type="term" value="P:regulation of MAPK cascade"/>
    <property type="evidence" value="ECO:0000315"/>
    <property type="project" value="UniProtKB"/>
</dbReference>
<dbReference type="GO" id="GO:0007338">
    <property type="term" value="P:single fertilization"/>
    <property type="evidence" value="ECO:0000250"/>
    <property type="project" value="UniProtKB"/>
</dbReference>
<dbReference type="FunFam" id="2.130.10.10:FF:000412">
    <property type="entry name" value="WD repeat domain 54"/>
    <property type="match status" value="1"/>
</dbReference>
<dbReference type="FunFam" id="2.130.10.10:FF:000508">
    <property type="entry name" value="WD repeat-containing protein 54 isoform X2"/>
    <property type="match status" value="1"/>
</dbReference>
<dbReference type="Gene3D" id="2.130.10.10">
    <property type="entry name" value="YVTN repeat-like/Quinoprotein amine dehydrogenase"/>
    <property type="match status" value="2"/>
</dbReference>
<dbReference type="InterPro" id="IPR015943">
    <property type="entry name" value="WD40/YVTN_repeat-like_dom_sf"/>
</dbReference>
<dbReference type="InterPro" id="IPR036322">
    <property type="entry name" value="WD40_repeat_dom_sf"/>
</dbReference>
<dbReference type="InterPro" id="IPR001680">
    <property type="entry name" value="WD40_rpt"/>
</dbReference>
<dbReference type="InterPro" id="IPR049546">
    <property type="entry name" value="WDR54_beta_propeller"/>
</dbReference>
<dbReference type="Pfam" id="PF21031">
    <property type="entry name" value="WDR54"/>
    <property type="match status" value="1"/>
</dbReference>
<dbReference type="SMART" id="SM00320">
    <property type="entry name" value="WD40"/>
    <property type="match status" value="3"/>
</dbReference>
<dbReference type="SUPFAM" id="SSF50978">
    <property type="entry name" value="WD40 repeat-like"/>
    <property type="match status" value="1"/>
</dbReference>
<dbReference type="PROSITE" id="PS50082">
    <property type="entry name" value="WD_REPEATS_2"/>
    <property type="match status" value="1"/>
</dbReference>
<dbReference type="PROSITE" id="PS50294">
    <property type="entry name" value="WD_REPEATS_REGION"/>
    <property type="match status" value="1"/>
</dbReference>
<reference key="1">
    <citation type="journal article" date="2004" name="Nat. Genet.">
        <title>Complete sequencing and characterization of 21,243 full-length human cDNAs.</title>
        <authorList>
            <person name="Ota T."/>
            <person name="Suzuki Y."/>
            <person name="Nishikawa T."/>
            <person name="Otsuki T."/>
            <person name="Sugiyama T."/>
            <person name="Irie R."/>
            <person name="Wakamatsu A."/>
            <person name="Hayashi K."/>
            <person name="Sato H."/>
            <person name="Nagai K."/>
            <person name="Kimura K."/>
            <person name="Makita H."/>
            <person name="Sekine M."/>
            <person name="Obayashi M."/>
            <person name="Nishi T."/>
            <person name="Shibahara T."/>
            <person name="Tanaka T."/>
            <person name="Ishii S."/>
            <person name="Yamamoto J."/>
            <person name="Saito K."/>
            <person name="Kawai Y."/>
            <person name="Isono Y."/>
            <person name="Nakamura Y."/>
            <person name="Nagahari K."/>
            <person name="Murakami K."/>
            <person name="Yasuda T."/>
            <person name="Iwayanagi T."/>
            <person name="Wagatsuma M."/>
            <person name="Shiratori A."/>
            <person name="Sudo H."/>
            <person name="Hosoiri T."/>
            <person name="Kaku Y."/>
            <person name="Kodaira H."/>
            <person name="Kondo H."/>
            <person name="Sugawara M."/>
            <person name="Takahashi M."/>
            <person name="Kanda K."/>
            <person name="Yokoi T."/>
            <person name="Furuya T."/>
            <person name="Kikkawa E."/>
            <person name="Omura Y."/>
            <person name="Abe K."/>
            <person name="Kamihara K."/>
            <person name="Katsuta N."/>
            <person name="Sato K."/>
            <person name="Tanikawa M."/>
            <person name="Yamazaki M."/>
            <person name="Ninomiya K."/>
            <person name="Ishibashi T."/>
            <person name="Yamashita H."/>
            <person name="Murakawa K."/>
            <person name="Fujimori K."/>
            <person name="Tanai H."/>
            <person name="Kimata M."/>
            <person name="Watanabe M."/>
            <person name="Hiraoka S."/>
            <person name="Chiba Y."/>
            <person name="Ishida S."/>
            <person name="Ono Y."/>
            <person name="Takiguchi S."/>
            <person name="Watanabe S."/>
            <person name="Yosida M."/>
            <person name="Hotuta T."/>
            <person name="Kusano J."/>
            <person name="Kanehori K."/>
            <person name="Takahashi-Fujii A."/>
            <person name="Hara H."/>
            <person name="Tanase T.-O."/>
            <person name="Nomura Y."/>
            <person name="Togiya S."/>
            <person name="Komai F."/>
            <person name="Hara R."/>
            <person name="Takeuchi K."/>
            <person name="Arita M."/>
            <person name="Imose N."/>
            <person name="Musashino K."/>
            <person name="Yuuki H."/>
            <person name="Oshima A."/>
            <person name="Sasaki N."/>
            <person name="Aotsuka S."/>
            <person name="Yoshikawa Y."/>
            <person name="Matsunawa H."/>
            <person name="Ichihara T."/>
            <person name="Shiohata N."/>
            <person name="Sano S."/>
            <person name="Moriya S."/>
            <person name="Momiyama H."/>
            <person name="Satoh N."/>
            <person name="Takami S."/>
            <person name="Terashima Y."/>
            <person name="Suzuki O."/>
            <person name="Nakagawa S."/>
            <person name="Senoh A."/>
            <person name="Mizoguchi H."/>
            <person name="Goto Y."/>
            <person name="Shimizu F."/>
            <person name="Wakebe H."/>
            <person name="Hishigaki H."/>
            <person name="Watanabe T."/>
            <person name="Sugiyama A."/>
            <person name="Takemoto M."/>
            <person name="Kawakami B."/>
            <person name="Yamazaki M."/>
            <person name="Watanabe K."/>
            <person name="Kumagai A."/>
            <person name="Itakura S."/>
            <person name="Fukuzumi Y."/>
            <person name="Fujimori Y."/>
            <person name="Komiyama M."/>
            <person name="Tashiro H."/>
            <person name="Tanigami A."/>
            <person name="Fujiwara T."/>
            <person name="Ono T."/>
            <person name="Yamada K."/>
            <person name="Fujii Y."/>
            <person name="Ozaki K."/>
            <person name="Hirao M."/>
            <person name="Ohmori Y."/>
            <person name="Kawabata A."/>
            <person name="Hikiji T."/>
            <person name="Kobatake N."/>
            <person name="Inagaki H."/>
            <person name="Ikema Y."/>
            <person name="Okamoto S."/>
            <person name="Okitani R."/>
            <person name="Kawakami T."/>
            <person name="Noguchi S."/>
            <person name="Itoh T."/>
            <person name="Shigeta K."/>
            <person name="Senba T."/>
            <person name="Matsumura K."/>
            <person name="Nakajima Y."/>
            <person name="Mizuno T."/>
            <person name="Morinaga M."/>
            <person name="Sasaki M."/>
            <person name="Togashi T."/>
            <person name="Oyama M."/>
            <person name="Hata H."/>
            <person name="Watanabe M."/>
            <person name="Komatsu T."/>
            <person name="Mizushima-Sugano J."/>
            <person name="Satoh T."/>
            <person name="Shirai Y."/>
            <person name="Takahashi Y."/>
            <person name="Nakagawa K."/>
            <person name="Okumura K."/>
            <person name="Nagase T."/>
            <person name="Nomura N."/>
            <person name="Kikuchi H."/>
            <person name="Masuho Y."/>
            <person name="Yamashita R."/>
            <person name="Nakai K."/>
            <person name="Yada T."/>
            <person name="Nakamura Y."/>
            <person name="Ohara O."/>
            <person name="Isogai T."/>
            <person name="Sugano S."/>
        </authorList>
    </citation>
    <scope>NUCLEOTIDE SEQUENCE [LARGE SCALE MRNA]</scope>
    <source>
        <tissue>Teratocarcinoma</tissue>
    </source>
</reference>
<reference key="2">
    <citation type="submission" date="2005-04" db="EMBL/GenBank/DDBJ databases">
        <authorList>
            <person name="Suzuki Y."/>
            <person name="Sugano S."/>
            <person name="Totoki Y."/>
            <person name="Toyoda A."/>
            <person name="Takeda T."/>
            <person name="Sakaki Y."/>
            <person name="Tanaka A."/>
            <person name="Yokoyama S."/>
        </authorList>
    </citation>
    <scope>NUCLEOTIDE SEQUENCE [LARGE SCALE MRNA]</scope>
    <source>
        <tissue>Brain</tissue>
    </source>
</reference>
<reference key="3">
    <citation type="submission" date="2005-09" db="EMBL/GenBank/DDBJ databases">
        <authorList>
            <person name="Mural R.J."/>
            <person name="Istrail S."/>
            <person name="Sutton G.G."/>
            <person name="Florea L."/>
            <person name="Halpern A.L."/>
            <person name="Mobarry C.M."/>
            <person name="Lippert R."/>
            <person name="Walenz B."/>
            <person name="Shatkay H."/>
            <person name="Dew I."/>
            <person name="Miller J.R."/>
            <person name="Flanigan M.J."/>
            <person name="Edwards N.J."/>
            <person name="Bolanos R."/>
            <person name="Fasulo D."/>
            <person name="Halldorsson B.V."/>
            <person name="Hannenhalli S."/>
            <person name="Turner R."/>
            <person name="Yooseph S."/>
            <person name="Lu F."/>
            <person name="Nusskern D.R."/>
            <person name="Shue B.C."/>
            <person name="Zheng X.H."/>
            <person name="Zhong F."/>
            <person name="Delcher A.L."/>
            <person name="Huson D.H."/>
            <person name="Kravitz S.A."/>
            <person name="Mouchard L."/>
            <person name="Reinert K."/>
            <person name="Remington K.A."/>
            <person name="Clark A.G."/>
            <person name="Waterman M.S."/>
            <person name="Eichler E.E."/>
            <person name="Adams M.D."/>
            <person name="Hunkapiller M.W."/>
            <person name="Myers E.W."/>
            <person name="Venter J.C."/>
        </authorList>
    </citation>
    <scope>NUCLEOTIDE SEQUENCE [LARGE SCALE GENOMIC DNA]</scope>
</reference>
<reference key="4">
    <citation type="journal article" date="2005" name="Nature">
        <title>Generation and annotation of the DNA sequences of human chromosomes 2 and 4.</title>
        <authorList>
            <person name="Hillier L.W."/>
            <person name="Graves T.A."/>
            <person name="Fulton R.S."/>
            <person name="Fulton L.A."/>
            <person name="Pepin K.H."/>
            <person name="Minx P."/>
            <person name="Wagner-McPherson C."/>
            <person name="Layman D."/>
            <person name="Wylie K."/>
            <person name="Sekhon M."/>
            <person name="Becker M.C."/>
            <person name="Fewell G.A."/>
            <person name="Delehaunty K.D."/>
            <person name="Miner T.L."/>
            <person name="Nash W.E."/>
            <person name="Kremitzki C."/>
            <person name="Oddy L."/>
            <person name="Du H."/>
            <person name="Sun H."/>
            <person name="Bradshaw-Cordum H."/>
            <person name="Ali J."/>
            <person name="Carter J."/>
            <person name="Cordes M."/>
            <person name="Harris A."/>
            <person name="Isak A."/>
            <person name="van Brunt A."/>
            <person name="Nguyen C."/>
            <person name="Du F."/>
            <person name="Courtney L."/>
            <person name="Kalicki J."/>
            <person name="Ozersky P."/>
            <person name="Abbott S."/>
            <person name="Armstrong J."/>
            <person name="Belter E.A."/>
            <person name="Caruso L."/>
            <person name="Cedroni M."/>
            <person name="Cotton M."/>
            <person name="Davidson T."/>
            <person name="Desai A."/>
            <person name="Elliott G."/>
            <person name="Erb T."/>
            <person name="Fronick C."/>
            <person name="Gaige T."/>
            <person name="Haakenson W."/>
            <person name="Haglund K."/>
            <person name="Holmes A."/>
            <person name="Harkins R."/>
            <person name="Kim K."/>
            <person name="Kruchowski S.S."/>
            <person name="Strong C.M."/>
            <person name="Grewal N."/>
            <person name="Goyea E."/>
            <person name="Hou S."/>
            <person name="Levy A."/>
            <person name="Martinka S."/>
            <person name="Mead K."/>
            <person name="McLellan M.D."/>
            <person name="Meyer R."/>
            <person name="Randall-Maher J."/>
            <person name="Tomlinson C."/>
            <person name="Dauphin-Kohlberg S."/>
            <person name="Kozlowicz-Reilly A."/>
            <person name="Shah N."/>
            <person name="Swearengen-Shahid S."/>
            <person name="Snider J."/>
            <person name="Strong J.T."/>
            <person name="Thompson J."/>
            <person name="Yoakum M."/>
            <person name="Leonard S."/>
            <person name="Pearman C."/>
            <person name="Trani L."/>
            <person name="Radionenko M."/>
            <person name="Waligorski J.E."/>
            <person name="Wang C."/>
            <person name="Rock S.M."/>
            <person name="Tin-Wollam A.-M."/>
            <person name="Maupin R."/>
            <person name="Latreille P."/>
            <person name="Wendl M.C."/>
            <person name="Yang S.-P."/>
            <person name="Pohl C."/>
            <person name="Wallis J.W."/>
            <person name="Spieth J."/>
            <person name="Bieri T.A."/>
            <person name="Berkowicz N."/>
            <person name="Nelson J.O."/>
            <person name="Osborne J."/>
            <person name="Ding L."/>
            <person name="Meyer R."/>
            <person name="Sabo A."/>
            <person name="Shotland Y."/>
            <person name="Sinha P."/>
            <person name="Wohldmann P.E."/>
            <person name="Cook L.L."/>
            <person name="Hickenbotham M.T."/>
            <person name="Eldred J."/>
            <person name="Williams D."/>
            <person name="Jones T.A."/>
            <person name="She X."/>
            <person name="Ciccarelli F.D."/>
            <person name="Izaurralde E."/>
            <person name="Taylor J."/>
            <person name="Schmutz J."/>
            <person name="Myers R.M."/>
            <person name="Cox D.R."/>
            <person name="Huang X."/>
            <person name="McPherson J.D."/>
            <person name="Mardis E.R."/>
            <person name="Clifton S.W."/>
            <person name="Warren W.C."/>
            <person name="Chinwalla A.T."/>
            <person name="Eddy S.R."/>
            <person name="Marra M.A."/>
            <person name="Ovcharenko I."/>
            <person name="Furey T.S."/>
            <person name="Miller W."/>
            <person name="Eichler E.E."/>
            <person name="Bork P."/>
            <person name="Suyama M."/>
            <person name="Torrents D."/>
            <person name="Waterston R.H."/>
            <person name="Wilson R.K."/>
        </authorList>
    </citation>
    <scope>NUCLEOTIDE SEQUENCE [LARGE SCALE GENOMIC DNA]</scope>
</reference>
<reference key="5">
    <citation type="journal article" date="2004" name="Genome Res.">
        <title>The status, quality, and expansion of the NIH full-length cDNA project: the Mammalian Gene Collection (MGC).</title>
        <authorList>
            <consortium name="The MGC Project Team"/>
        </authorList>
    </citation>
    <scope>NUCLEOTIDE SEQUENCE [LARGE SCALE MRNA]</scope>
    <source>
        <tissue>Skin</tissue>
    </source>
</reference>
<reference key="6">
    <citation type="journal article" date="2005" name="Nat. Biotechnol.">
        <title>Immunoaffinity profiling of tyrosine phosphorylation in cancer cells.</title>
        <authorList>
            <person name="Rush J."/>
            <person name="Moritz A."/>
            <person name="Lee K.A."/>
            <person name="Guo A."/>
            <person name="Goss V.L."/>
            <person name="Spek E.J."/>
            <person name="Zhang H."/>
            <person name="Zha X.-M."/>
            <person name="Polakiewicz R.D."/>
            <person name="Comb M.J."/>
        </authorList>
    </citation>
    <scope>IDENTIFICATION BY MASS SPECTROMETRY [LARGE SCALE ANALYSIS]</scope>
</reference>
<reference key="7">
    <citation type="journal article" date="2019" name="Biochim. Biophys. Acta">
        <title>Transglutaminase-mediated cross-linking of WDR54 regulates EGF receptor-signaling.</title>
        <authorList>
            <person name="Maeda A."/>
            <person name="Nishino T."/>
            <person name="Matsunaga R."/>
            <person name="Yokoyama A."/>
            <person name="Suga H."/>
            <person name="Yagi T."/>
            <person name="Konishi H."/>
        </authorList>
    </citation>
    <scope>CROSS-LINKING</scope>
    <scope>DOMAIN</scope>
    <scope>SUBUNIT</scope>
    <scope>ALTERNATIVE SPLICING</scope>
    <scope>MUTAGENESIS OF TRP-107; TRP-196; TRP-221; TRP-279; LYS-280 AND GLN-304</scope>
    <scope>UBIQUITINATION</scope>
    <scope>SUBCELLULAR LOCATION</scope>
</reference>
<reference key="8">
    <citation type="journal article" date="2019" name="Int. J. Cancer">
        <title>Clinical significance and biological function of WD repeat domain 54 as an oncogene in colorectal cancer.</title>
        <authorList>
            <person name="Yuan Y."/>
            <person name="Qi G."/>
            <person name="Shen H."/>
            <person name="Guo A."/>
            <person name="Cao F."/>
            <person name="Zhu Y."/>
            <person name="Xiao C."/>
            <person name="Chang W."/>
            <person name="Zheng S."/>
        </authorList>
    </citation>
    <scope>TISSUE SPECIFICITY</scope>
    <scope>ALTERNATIVE SPLICING</scope>
</reference>
<keyword id="KW-0025">Alternative splicing</keyword>
<keyword id="KW-1003">Cell membrane</keyword>
<keyword id="KW-0963">Cytoplasm</keyword>
<keyword id="KW-0278">Fertilization</keyword>
<keyword id="KW-0472">Membrane</keyword>
<keyword id="KW-1267">Proteomics identification</keyword>
<keyword id="KW-1185">Reference proteome</keyword>
<keyword id="KW-0677">Repeat</keyword>
<keyword id="KW-0832">Ubl conjugation</keyword>
<keyword id="KW-0853">WD repeat</keyword>
<gene>
    <name evidence="8" type="primary">WDR54</name>
</gene>
<proteinExistence type="evidence at protein level"/>
<organism>
    <name type="scientific">Homo sapiens</name>
    <name type="common">Human</name>
    <dbReference type="NCBI Taxonomy" id="9606"/>
    <lineage>
        <taxon>Eukaryota</taxon>
        <taxon>Metazoa</taxon>
        <taxon>Chordata</taxon>
        <taxon>Craniata</taxon>
        <taxon>Vertebrata</taxon>
        <taxon>Euteleostomi</taxon>
        <taxon>Mammalia</taxon>
        <taxon>Eutheria</taxon>
        <taxon>Euarchontoglires</taxon>
        <taxon>Primates</taxon>
        <taxon>Haplorrhini</taxon>
        <taxon>Catarrhini</taxon>
        <taxon>Hominidae</taxon>
        <taxon>Homo</taxon>
    </lineage>
</organism>
<accession>Q9H977</accession>
<accession>B9A049</accession>
<accession>D6W5I3</accession>
<accession>Q53H85</accession>
<accession>Q86V45</accession>
<feature type="chain" id="PRO_0000051415" description="WD repeat-containing protein 54">
    <location>
        <begin position="1"/>
        <end position="334"/>
    </location>
</feature>
<feature type="repeat" description="WD 1" evidence="2">
    <location>
        <begin position="162"/>
        <end position="206"/>
    </location>
</feature>
<feature type="repeat" description="WD 2" evidence="2">
    <location>
        <begin position="208"/>
        <end position="247"/>
    </location>
</feature>
<feature type="repeat" description="WD 3" evidence="2">
    <location>
        <begin position="250"/>
        <end position="289"/>
    </location>
</feature>
<feature type="splice variant" id="VSP_060292" description="In isoform 3.">
    <original>MFRWERSIPLRGSAAALCNNLSVLQLPARNLTYFGVVHGPSAQLLSAAPEGVPLAQRQLHAKEGAGVSPPLIT</original>
    <variation>MVAADLEGPYEPGVRRADLGL</variation>
    <location>
        <begin position="1"/>
        <end position="73"/>
    </location>
</feature>
<feature type="splice variant" id="VSP_060293" description="In isoform 2.">
    <original>M</original>
    <variation>MVAADLEGPYEPGVRM</variation>
    <location>
        <position position="1"/>
    </location>
</feature>
<feature type="splice variant" id="VSP_060294" description="In isoform 3.">
    <original>VEHCH</original>
    <variation>ATPLL</variation>
    <location>
        <begin position="292"/>
        <end position="296"/>
    </location>
</feature>
<feature type="splice variant" id="VSP_060295" description="In isoform 3.">
    <location>
        <begin position="297"/>
        <end position="334"/>
    </location>
</feature>
<feature type="mutagenesis site" description="Decreases cross-linking." evidence="4">
    <original>W</original>
    <variation>A</variation>
    <location>
        <position position="107"/>
    </location>
</feature>
<feature type="mutagenesis site" description="Slightly decreases cross-linking." evidence="4">
    <original>W</original>
    <variation>A</variation>
    <location>
        <position position="196"/>
    </location>
</feature>
<feature type="mutagenesis site" description="Decreases cross-linking." evidence="4">
    <original>W</original>
    <variation>A</variation>
    <location>
        <position position="221"/>
    </location>
</feature>
<feature type="mutagenesis site" description="Abolishes cross-linking. Decreases ERK signaling pathway activation. Abolishes inhibition of EGF receptor degradation after EGF stimulation." evidence="4">
    <original>W</original>
    <variation>A</variation>
    <location>
        <position position="279"/>
    </location>
</feature>
<feature type="mutagenesis site" description="Decreases cross-linking. Abolishes ubiquitination." evidence="4">
    <original>K</original>
    <variation>R</variation>
    <location>
        <position position="280"/>
    </location>
</feature>
<feature type="mutagenesis site" description="No effect on cross-linking." evidence="4">
    <original>Q</original>
    <variation>A</variation>
    <location>
        <position position="304"/>
    </location>
</feature>
<feature type="sequence conflict" description="In Ref. 2; BAD96416." evidence="7" ref="2">
    <original>N</original>
    <variation>D</variation>
    <location>
        <position position="243"/>
    </location>
</feature>
<protein>
    <recommendedName>
        <fullName evidence="7">WD repeat-containing protein 54</fullName>
    </recommendedName>
</protein>
<name>WDR54_HUMAN</name>
<comment type="function">
    <text evidence="1 4">Plays a role in the adhesion and fusion of the sperm-oocyte membrane through its interactions with IZUMO1 and IZUMO1R/JUNO (By similarity). When cross-linked to form dimers and trimers, it has a regulatory effect on ERK signaling pathway activity in response to EGF stimulation. Colocalizes with the EGF receptor in WDR54-specific vesicle where it sustains the internalization and controls the degradation of the EGF receptor after EGF stimulation (PubMed:30458214).</text>
</comment>
<comment type="subunit">
    <text evidence="1 4">Homodimer and homotrimer; forms tight forms of dimers and trimers (PubMed:30458214). Interacts with IZUMO1 and IZUMO1R/JUNO (By similarity).</text>
</comment>
<comment type="interaction">
    <interactant intactId="EBI-23279779">
        <id>Q9H977-4</id>
    </interactant>
    <interactant intactId="EBI-10297093">
        <id>Q9BRQ3</id>
        <label>NUDT22</label>
    </interactant>
    <organismsDiffer>false</organismsDiffer>
    <experiments>5</experiments>
</comment>
<comment type="subcellular location">
    <subcellularLocation>
        <location evidence="4">Vesicle</location>
    </subcellularLocation>
    <subcellularLocation>
        <location evidence="1">Cytoplasm</location>
    </subcellularLocation>
    <subcellularLocation>
        <location evidence="1">Cell membrane</location>
    </subcellularLocation>
    <text evidence="4">Aggregates in vesicles when cross-linked.</text>
</comment>
<comment type="alternative products">
    <event type="alternative splicing"/>
    <isoform>
        <id>Q9H977-1</id>
        <name>1</name>
        <name evidence="5 6">b</name>
        <sequence type="displayed"/>
    </isoform>
    <isoform>
        <id>Q9H977-3</id>
        <name>3</name>
        <name evidence="5 6">c</name>
        <sequence type="described" ref="VSP_060292 VSP_060294 VSP_060295"/>
    </isoform>
    <isoform>
        <id>Q9H977-4</id>
        <name>2</name>
        <name evidence="5 6">a</name>
        <sequence type="described" ref="VSP_060293"/>
    </isoform>
</comment>
<comment type="tissue specificity">
    <text evidence="3">Expressed in epithelial cells (at protein level) (PubMed:29987896). Isoform 3 expression is highly increased in colorectal cancer cells (PubMed:29987896).</text>
</comment>
<comment type="domain">
    <text evidence="4">WD6 repeat is required for cross-linking by TGM2.</text>
</comment>
<comment type="PTM">
    <text evidence="4">Cross-linked to tightly form both dimers and trimers by TGM2. Cross-linking enhances the activation of EGF receptor-mediated signaling pathway (PubMed:30458214). Cross-linking is inhibited by EGF (PubMed:30458214).</text>
</comment>
<comment type="PTM">
    <text evidence="4">Ubiquitinated. EGF increases ubiquitination.</text>
</comment>
<sequence length="334" mass="35891">MFRWERSIPLRGSAAALCNNLSVLQLPARNLTYFGVVHGPSAQLLSAAPEGVPLAQRQLHAKEGAGVSPPLITQVHWCVLPFRVLLVLTSHRGIQMYESNGYTMVYWHALDSGDASPVQAVFARGIAASGHFICVGTWSGRVLVFDIPAKGPNIVLSEELAGHQMPITDIATEPAQGQDCVADMVTADDSGLLCVWRSGPEFTLLTRIPGFGVPCPSVQLWQGIIAAGYGNGQVHLYEATTGNLHVQINAHARAICALDLASEVGKLLSAGEDTFVHIWKLSRNPESGYIEVEHCHGECVADTQLCGARFCDSSGNSFAVTGYDLAEIRRFSSV</sequence>